<reference key="1">
    <citation type="journal article" date="2004" name="Science">
        <title>A toll-like receptor that prevents infection by uropathogenic bacteria.</title>
        <authorList>
            <person name="Zhang D."/>
            <person name="Zhang G."/>
            <person name="Hayden M.S."/>
            <person name="Greenblatt M.B."/>
            <person name="Bussey C."/>
            <person name="Flavell R.A."/>
            <person name="Ghosh S."/>
        </authorList>
    </citation>
    <scope>NUCLEOTIDE SEQUENCE [MRNA]</scope>
    <scope>FUNCTION</scope>
    <scope>TISSUE SPECIFICITY</scope>
    <scope>DISRUPTION PHENOTYPE</scope>
    <scope>MUTAGENESIS OF PRO-804</scope>
    <source>
        <strain>C57BL/6J</strain>
    </source>
</reference>
<reference key="2">
    <citation type="journal article" date="2004" name="Proc. Natl. Acad. Sci. U.S.A.">
        <title>Toll-like receptors 9 and 3 as essential components of innate immune defense against mouse cytomegalovirus infection.</title>
        <authorList>
            <person name="Tabeta K."/>
            <person name="Georgel P."/>
            <person name="Janssen E."/>
            <person name="Du X."/>
            <person name="Hoebe K."/>
            <person name="Crozat K."/>
            <person name="Mudd S."/>
            <person name="Shamel L."/>
            <person name="Sovath S."/>
            <person name="Goode J."/>
            <person name="Alexopoulou L."/>
            <person name="Flavell R.A."/>
            <person name="Beutler B."/>
        </authorList>
    </citation>
    <scope>NUCLEOTIDE SEQUENCE [MRNA]</scope>
    <source>
        <strain>C57BL/6J</strain>
    </source>
</reference>
<reference key="3">
    <citation type="journal article" date="2005" name="Science">
        <title>The transcriptional landscape of the mammalian genome.</title>
        <authorList>
            <person name="Carninci P."/>
            <person name="Kasukawa T."/>
            <person name="Katayama S."/>
            <person name="Gough J."/>
            <person name="Frith M.C."/>
            <person name="Maeda N."/>
            <person name="Oyama R."/>
            <person name="Ravasi T."/>
            <person name="Lenhard B."/>
            <person name="Wells C."/>
            <person name="Kodzius R."/>
            <person name="Shimokawa K."/>
            <person name="Bajic V.B."/>
            <person name="Brenner S.E."/>
            <person name="Batalov S."/>
            <person name="Forrest A.R."/>
            <person name="Zavolan M."/>
            <person name="Davis M.J."/>
            <person name="Wilming L.G."/>
            <person name="Aidinis V."/>
            <person name="Allen J.E."/>
            <person name="Ambesi-Impiombato A."/>
            <person name="Apweiler R."/>
            <person name="Aturaliya R.N."/>
            <person name="Bailey T.L."/>
            <person name="Bansal M."/>
            <person name="Baxter L."/>
            <person name="Beisel K.W."/>
            <person name="Bersano T."/>
            <person name="Bono H."/>
            <person name="Chalk A.M."/>
            <person name="Chiu K.P."/>
            <person name="Choudhary V."/>
            <person name="Christoffels A."/>
            <person name="Clutterbuck D.R."/>
            <person name="Crowe M.L."/>
            <person name="Dalla E."/>
            <person name="Dalrymple B.P."/>
            <person name="de Bono B."/>
            <person name="Della Gatta G."/>
            <person name="di Bernardo D."/>
            <person name="Down T."/>
            <person name="Engstrom P."/>
            <person name="Fagiolini M."/>
            <person name="Faulkner G."/>
            <person name="Fletcher C.F."/>
            <person name="Fukushima T."/>
            <person name="Furuno M."/>
            <person name="Futaki S."/>
            <person name="Gariboldi M."/>
            <person name="Georgii-Hemming P."/>
            <person name="Gingeras T.R."/>
            <person name="Gojobori T."/>
            <person name="Green R.E."/>
            <person name="Gustincich S."/>
            <person name="Harbers M."/>
            <person name="Hayashi Y."/>
            <person name="Hensch T.K."/>
            <person name="Hirokawa N."/>
            <person name="Hill D."/>
            <person name="Huminiecki L."/>
            <person name="Iacono M."/>
            <person name="Ikeo K."/>
            <person name="Iwama A."/>
            <person name="Ishikawa T."/>
            <person name="Jakt M."/>
            <person name="Kanapin A."/>
            <person name="Katoh M."/>
            <person name="Kawasawa Y."/>
            <person name="Kelso J."/>
            <person name="Kitamura H."/>
            <person name="Kitano H."/>
            <person name="Kollias G."/>
            <person name="Krishnan S.P."/>
            <person name="Kruger A."/>
            <person name="Kummerfeld S.K."/>
            <person name="Kurochkin I.V."/>
            <person name="Lareau L.F."/>
            <person name="Lazarevic D."/>
            <person name="Lipovich L."/>
            <person name="Liu J."/>
            <person name="Liuni S."/>
            <person name="McWilliam S."/>
            <person name="Madan Babu M."/>
            <person name="Madera M."/>
            <person name="Marchionni L."/>
            <person name="Matsuda H."/>
            <person name="Matsuzawa S."/>
            <person name="Miki H."/>
            <person name="Mignone F."/>
            <person name="Miyake S."/>
            <person name="Morris K."/>
            <person name="Mottagui-Tabar S."/>
            <person name="Mulder N."/>
            <person name="Nakano N."/>
            <person name="Nakauchi H."/>
            <person name="Ng P."/>
            <person name="Nilsson R."/>
            <person name="Nishiguchi S."/>
            <person name="Nishikawa S."/>
            <person name="Nori F."/>
            <person name="Ohara O."/>
            <person name="Okazaki Y."/>
            <person name="Orlando V."/>
            <person name="Pang K.C."/>
            <person name="Pavan W.J."/>
            <person name="Pavesi G."/>
            <person name="Pesole G."/>
            <person name="Petrovsky N."/>
            <person name="Piazza S."/>
            <person name="Reed J."/>
            <person name="Reid J.F."/>
            <person name="Ring B.Z."/>
            <person name="Ringwald M."/>
            <person name="Rost B."/>
            <person name="Ruan Y."/>
            <person name="Salzberg S.L."/>
            <person name="Sandelin A."/>
            <person name="Schneider C."/>
            <person name="Schoenbach C."/>
            <person name="Sekiguchi K."/>
            <person name="Semple C.A."/>
            <person name="Seno S."/>
            <person name="Sessa L."/>
            <person name="Sheng Y."/>
            <person name="Shibata Y."/>
            <person name="Shimada H."/>
            <person name="Shimada K."/>
            <person name="Silva D."/>
            <person name="Sinclair B."/>
            <person name="Sperling S."/>
            <person name="Stupka E."/>
            <person name="Sugiura K."/>
            <person name="Sultana R."/>
            <person name="Takenaka Y."/>
            <person name="Taki K."/>
            <person name="Tammoja K."/>
            <person name="Tan S.L."/>
            <person name="Tang S."/>
            <person name="Taylor M.S."/>
            <person name="Tegner J."/>
            <person name="Teichmann S.A."/>
            <person name="Ueda H.R."/>
            <person name="van Nimwegen E."/>
            <person name="Verardo R."/>
            <person name="Wei C.L."/>
            <person name="Yagi K."/>
            <person name="Yamanishi H."/>
            <person name="Zabarovsky E."/>
            <person name="Zhu S."/>
            <person name="Zimmer A."/>
            <person name="Hide W."/>
            <person name="Bult C."/>
            <person name="Grimmond S.M."/>
            <person name="Teasdale R.D."/>
            <person name="Liu E.T."/>
            <person name="Brusic V."/>
            <person name="Quackenbush J."/>
            <person name="Wahlestedt C."/>
            <person name="Mattick J.S."/>
            <person name="Hume D.A."/>
            <person name="Kai C."/>
            <person name="Sasaki D."/>
            <person name="Tomaru Y."/>
            <person name="Fukuda S."/>
            <person name="Kanamori-Katayama M."/>
            <person name="Suzuki M."/>
            <person name="Aoki J."/>
            <person name="Arakawa T."/>
            <person name="Iida J."/>
            <person name="Imamura K."/>
            <person name="Itoh M."/>
            <person name="Kato T."/>
            <person name="Kawaji H."/>
            <person name="Kawagashira N."/>
            <person name="Kawashima T."/>
            <person name="Kojima M."/>
            <person name="Kondo S."/>
            <person name="Konno H."/>
            <person name="Nakano K."/>
            <person name="Ninomiya N."/>
            <person name="Nishio T."/>
            <person name="Okada M."/>
            <person name="Plessy C."/>
            <person name="Shibata K."/>
            <person name="Shiraki T."/>
            <person name="Suzuki S."/>
            <person name="Tagami M."/>
            <person name="Waki K."/>
            <person name="Watahiki A."/>
            <person name="Okamura-Oho Y."/>
            <person name="Suzuki H."/>
            <person name="Kawai J."/>
            <person name="Hayashizaki Y."/>
        </authorList>
    </citation>
    <scope>NUCLEOTIDE SEQUENCE [LARGE SCALE MRNA]</scope>
    <source>
        <strain>C57BL/6J</strain>
        <tissue>Bone</tissue>
    </source>
</reference>
<evidence type="ECO:0000250" key="1"/>
<evidence type="ECO:0000250" key="2">
    <source>
        <dbReference type="UniProtKB" id="O00206"/>
    </source>
</evidence>
<evidence type="ECO:0000255" key="3"/>
<evidence type="ECO:0000255" key="4">
    <source>
        <dbReference type="PROSITE-ProRule" id="PRU00204"/>
    </source>
</evidence>
<evidence type="ECO:0000269" key="5">
    <source>
    </source>
</evidence>
<evidence type="ECO:0000303" key="6">
    <source>
    </source>
</evidence>
<evidence type="ECO:0000303" key="7">
    <source>
    </source>
</evidence>
<evidence type="ECO:0000305" key="8"/>
<evidence type="ECO:0000305" key="9">
    <source>
    </source>
</evidence>
<evidence type="ECO:0000312" key="10">
    <source>
        <dbReference type="MGI" id="MGI:3045221"/>
    </source>
</evidence>
<organism>
    <name type="scientific">Mus musculus</name>
    <name type="common">Mouse</name>
    <dbReference type="NCBI Taxonomy" id="10090"/>
    <lineage>
        <taxon>Eukaryota</taxon>
        <taxon>Metazoa</taxon>
        <taxon>Chordata</taxon>
        <taxon>Craniata</taxon>
        <taxon>Vertebrata</taxon>
        <taxon>Euteleostomi</taxon>
        <taxon>Mammalia</taxon>
        <taxon>Eutheria</taxon>
        <taxon>Euarchontoglires</taxon>
        <taxon>Glires</taxon>
        <taxon>Rodentia</taxon>
        <taxon>Myomorpha</taxon>
        <taxon>Muroidea</taxon>
        <taxon>Muridae</taxon>
        <taxon>Murinae</taxon>
        <taxon>Mus</taxon>
        <taxon>Mus</taxon>
    </lineage>
</organism>
<gene>
    <name evidence="6 10" type="primary">Tlr12</name>
    <name evidence="10" type="synonym">Gm1365</name>
    <name evidence="7" type="synonym">Tlr11</name>
</gene>
<dbReference type="EMBL" id="AY531552">
    <property type="protein sequence ID" value="AAS83531.1"/>
    <property type="molecule type" value="mRNA"/>
</dbReference>
<dbReference type="EMBL" id="AY510705">
    <property type="protein sequence ID" value="AAS37673.1"/>
    <property type="molecule type" value="mRNA"/>
</dbReference>
<dbReference type="EMBL" id="AK137624">
    <property type="protein sequence ID" value="BAE23434.1"/>
    <property type="molecule type" value="mRNA"/>
</dbReference>
<dbReference type="CCDS" id="CCDS18673.1"/>
<dbReference type="RefSeq" id="NP_991392.1">
    <property type="nucleotide sequence ID" value="NM_205823.2"/>
</dbReference>
<dbReference type="SMR" id="Q6QNU9"/>
<dbReference type="FunCoup" id="Q6QNU9">
    <property type="interactions" value="3"/>
</dbReference>
<dbReference type="STRING" id="10090.ENSMUSP00000074381"/>
<dbReference type="GlyCosmos" id="Q6QNU9">
    <property type="glycosylation" value="4 sites, No reported glycans"/>
</dbReference>
<dbReference type="GlyGen" id="Q6QNU9">
    <property type="glycosylation" value="4 sites, 2 N-linked glycans (2 sites)"/>
</dbReference>
<dbReference type="iPTMnet" id="Q6QNU9"/>
<dbReference type="PhosphoSitePlus" id="Q6QNU9"/>
<dbReference type="PaxDb" id="10090-ENSMUSP00000074381"/>
<dbReference type="ProteomicsDB" id="258892"/>
<dbReference type="DNASU" id="384059"/>
<dbReference type="Ensembl" id="ENSMUST00000074829.4">
    <property type="protein sequence ID" value="ENSMUSP00000074381.3"/>
    <property type="gene ID" value="ENSMUSG00000062545.5"/>
</dbReference>
<dbReference type="GeneID" id="384059"/>
<dbReference type="KEGG" id="mmu:384059"/>
<dbReference type="UCSC" id="uc008uvf.1">
    <property type="organism name" value="mouse"/>
</dbReference>
<dbReference type="AGR" id="MGI:3045221"/>
<dbReference type="CTD" id="384059"/>
<dbReference type="MGI" id="MGI:3045221">
    <property type="gene designation" value="Tlr12"/>
</dbReference>
<dbReference type="VEuPathDB" id="HostDB:ENSMUSG00000062545"/>
<dbReference type="eggNOG" id="KOG4641">
    <property type="taxonomic scope" value="Eukaryota"/>
</dbReference>
<dbReference type="GeneTree" id="ENSGT00940000165464"/>
<dbReference type="HOGENOM" id="CLU_318753_0_0_1"/>
<dbReference type="InParanoid" id="Q6QNU9"/>
<dbReference type="OMA" id="QCANAWV"/>
<dbReference type="OrthoDB" id="1081807at2759"/>
<dbReference type="PhylomeDB" id="Q6QNU9"/>
<dbReference type="TreeFam" id="TF351113"/>
<dbReference type="BioGRID-ORCS" id="384059">
    <property type="hits" value="1 hit in 77 CRISPR screens"/>
</dbReference>
<dbReference type="PRO" id="PR:Q6QNU9"/>
<dbReference type="Proteomes" id="UP000000589">
    <property type="component" value="Chromosome 4"/>
</dbReference>
<dbReference type="RNAct" id="Q6QNU9">
    <property type="molecule type" value="protein"/>
</dbReference>
<dbReference type="Bgee" id="ENSMUSG00000062545">
    <property type="expression patterns" value="Expressed in right kidney and 45 other cell types or tissues"/>
</dbReference>
<dbReference type="ExpressionAtlas" id="Q6QNU9">
    <property type="expression patterns" value="baseline and differential"/>
</dbReference>
<dbReference type="GO" id="GO:0016020">
    <property type="term" value="C:membrane"/>
    <property type="evidence" value="ECO:0007669"/>
    <property type="project" value="UniProtKB-SubCell"/>
</dbReference>
<dbReference type="GO" id="GO:0061809">
    <property type="term" value="F:NAD+ nucleosidase activity, cyclic ADP-ribose generating"/>
    <property type="evidence" value="ECO:0007669"/>
    <property type="project" value="UniProtKB-EC"/>
</dbReference>
<dbReference type="GO" id="GO:0042832">
    <property type="term" value="P:defense response to protozoan"/>
    <property type="evidence" value="ECO:0000315"/>
    <property type="project" value="MGI"/>
</dbReference>
<dbReference type="GO" id="GO:0006954">
    <property type="term" value="P:inflammatory response"/>
    <property type="evidence" value="ECO:0007669"/>
    <property type="project" value="UniProtKB-KW"/>
</dbReference>
<dbReference type="GO" id="GO:0045087">
    <property type="term" value="P:innate immune response"/>
    <property type="evidence" value="ECO:0007669"/>
    <property type="project" value="UniProtKB-KW"/>
</dbReference>
<dbReference type="GO" id="GO:0007165">
    <property type="term" value="P:signal transduction"/>
    <property type="evidence" value="ECO:0007669"/>
    <property type="project" value="InterPro"/>
</dbReference>
<dbReference type="FunFam" id="3.80.10.10:FF:000730">
    <property type="entry name" value="Toll-like receptor 11"/>
    <property type="match status" value="1"/>
</dbReference>
<dbReference type="FunFam" id="3.80.10.10:FF:000832">
    <property type="entry name" value="Toll-like receptor 11"/>
    <property type="match status" value="1"/>
</dbReference>
<dbReference type="FunFam" id="3.80.10.10:FF:001639">
    <property type="entry name" value="Toll-like receptor 12"/>
    <property type="match status" value="1"/>
</dbReference>
<dbReference type="FunFam" id="3.40.50.10140:FF:000001">
    <property type="entry name" value="Toll-like receptor 2"/>
    <property type="match status" value="1"/>
</dbReference>
<dbReference type="Gene3D" id="3.80.10.10">
    <property type="entry name" value="Ribonuclease Inhibitor"/>
    <property type="match status" value="3"/>
</dbReference>
<dbReference type="Gene3D" id="3.40.50.10140">
    <property type="entry name" value="Toll/interleukin-1 receptor homology (TIR) domain"/>
    <property type="match status" value="1"/>
</dbReference>
<dbReference type="InterPro" id="IPR001611">
    <property type="entry name" value="Leu-rich_rpt"/>
</dbReference>
<dbReference type="InterPro" id="IPR003591">
    <property type="entry name" value="Leu-rich_rpt_typical-subtyp"/>
</dbReference>
<dbReference type="InterPro" id="IPR032675">
    <property type="entry name" value="LRR_dom_sf"/>
</dbReference>
<dbReference type="InterPro" id="IPR000157">
    <property type="entry name" value="TIR_dom"/>
</dbReference>
<dbReference type="InterPro" id="IPR035897">
    <property type="entry name" value="Toll_tir_struct_dom_sf"/>
</dbReference>
<dbReference type="PANTHER" id="PTHR24365">
    <property type="entry name" value="TOLL-LIKE RECEPTOR"/>
    <property type="match status" value="1"/>
</dbReference>
<dbReference type="PANTHER" id="PTHR24365:SF545">
    <property type="entry name" value="TOLL-LIKE RECEPTOR 12"/>
    <property type="match status" value="1"/>
</dbReference>
<dbReference type="Pfam" id="PF13855">
    <property type="entry name" value="LRR_8"/>
    <property type="match status" value="2"/>
</dbReference>
<dbReference type="Pfam" id="PF13676">
    <property type="entry name" value="TIR_2"/>
    <property type="match status" value="1"/>
</dbReference>
<dbReference type="SMART" id="SM00369">
    <property type="entry name" value="LRR_TYP"/>
    <property type="match status" value="7"/>
</dbReference>
<dbReference type="SMART" id="SM00255">
    <property type="entry name" value="TIR"/>
    <property type="match status" value="1"/>
</dbReference>
<dbReference type="SUPFAM" id="SSF52058">
    <property type="entry name" value="L domain-like"/>
    <property type="match status" value="2"/>
</dbReference>
<dbReference type="SUPFAM" id="SSF52200">
    <property type="entry name" value="Toll/Interleukin receptor TIR domain"/>
    <property type="match status" value="1"/>
</dbReference>
<dbReference type="PROSITE" id="PS51450">
    <property type="entry name" value="LRR"/>
    <property type="match status" value="7"/>
</dbReference>
<dbReference type="PROSITE" id="PS50104">
    <property type="entry name" value="TIR"/>
    <property type="match status" value="1"/>
</dbReference>
<feature type="signal peptide" evidence="3">
    <location>
        <begin position="1"/>
        <end position="21"/>
    </location>
</feature>
<feature type="chain" id="PRO_0000042794" description="Toll-like receptor 12">
    <location>
        <begin position="22"/>
        <end position="906"/>
    </location>
</feature>
<feature type="topological domain" description="Extracellular" evidence="3">
    <location>
        <begin position="22"/>
        <end position="709"/>
    </location>
</feature>
<feature type="transmembrane region" description="Helical" evidence="3">
    <location>
        <begin position="710"/>
        <end position="730"/>
    </location>
</feature>
<feature type="topological domain" description="Cytoplasmic" evidence="3">
    <location>
        <begin position="731"/>
        <end position="906"/>
    </location>
</feature>
<feature type="repeat" description="LRR 1">
    <location>
        <begin position="91"/>
        <end position="114"/>
    </location>
</feature>
<feature type="repeat" description="LRR 2">
    <location>
        <begin position="115"/>
        <end position="140"/>
    </location>
</feature>
<feature type="repeat" description="LRR 3">
    <location>
        <begin position="142"/>
        <end position="170"/>
    </location>
</feature>
<feature type="repeat" description="LRR 4">
    <location>
        <begin position="198"/>
        <end position="222"/>
    </location>
</feature>
<feature type="repeat" description="LRR 5">
    <location>
        <begin position="224"/>
        <end position="247"/>
    </location>
</feature>
<feature type="repeat" description="LRR 6">
    <location>
        <begin position="267"/>
        <end position="290"/>
    </location>
</feature>
<feature type="repeat" description="LRR 7">
    <location>
        <begin position="291"/>
        <end position="314"/>
    </location>
</feature>
<feature type="repeat" description="LRR 8">
    <location>
        <begin position="316"/>
        <end position="338"/>
    </location>
</feature>
<feature type="repeat" description="LRR 9">
    <location>
        <begin position="341"/>
        <end position="364"/>
    </location>
</feature>
<feature type="repeat" description="LRR 10">
    <location>
        <begin position="366"/>
        <end position="388"/>
    </location>
</feature>
<feature type="repeat" description="LRR 11">
    <location>
        <begin position="389"/>
        <end position="412"/>
    </location>
</feature>
<feature type="repeat" description="LRR 12">
    <location>
        <begin position="414"/>
        <end position="436"/>
    </location>
</feature>
<feature type="repeat" description="LRR 13">
    <location>
        <begin position="462"/>
        <end position="484"/>
    </location>
</feature>
<feature type="repeat" description="LRR 14">
    <location>
        <begin position="485"/>
        <end position="508"/>
    </location>
</feature>
<feature type="repeat" description="LRR 15">
    <location>
        <begin position="510"/>
        <end position="533"/>
    </location>
</feature>
<feature type="repeat" description="LRR 16">
    <location>
        <begin position="562"/>
        <end position="586"/>
    </location>
</feature>
<feature type="repeat" description="LRR 17">
    <location>
        <begin position="591"/>
        <end position="614"/>
    </location>
</feature>
<feature type="domain" description="TIR" evidence="4">
    <location>
        <begin position="759"/>
        <end position="905"/>
    </location>
</feature>
<feature type="glycosylation site" description="N-linked (GlcNAc...) asparagine" evidence="3">
    <location>
        <position position="59"/>
    </location>
</feature>
<feature type="glycosylation site" description="N-linked (GlcNAc...) asparagine" evidence="3">
    <location>
        <position position="336"/>
    </location>
</feature>
<feature type="glycosylation site" description="N-linked (GlcNAc...) asparagine" evidence="3">
    <location>
        <position position="505"/>
    </location>
</feature>
<feature type="glycosylation site" description="N-linked (GlcNAc...) asparagine" evidence="3">
    <location>
        <position position="552"/>
    </location>
</feature>
<feature type="mutagenesis site" description="Fails to activate NF-kappa-B." evidence="5">
    <original>P</original>
    <variation>H</variation>
    <location>
        <position position="804"/>
    </location>
</feature>
<name>TLR12_MOUSE</name>
<accession>Q6QNU9</accession>
<sequence length="906" mass="99945">MGRYWLLPGLLLSLPLVTGWSTSNCLVTEGSRLPLVSRYFTFCRHSKLSFLAACLSVSNLTQTLEVVPRTVEGLCLGGTVSTLLPDAFSAFPGLKVLALSLHLTQLLPGALRGLGQLQSLSFFDSPLRRSLFLPPDAFSDLISLQRLHISGPCLDKKAGIRLPPGLQWLGVTLSCIQDVGELAGMFPDLVQGSSSRVSWTLQKLDLSSNWKLKMASPGSLQGLQVEILDLTRTPLDAVWLKGLGLQKLDVLYAQTATAELAAEAVAHFELQGLIVKESKIGSISQEALASCHSLKTLGLSSTGLTKLPPGFLTAMPRLQRLELSGNQLQSAVLCMNETGDVSGLTTLDLSGNRLRILPPAAFSCLPHLRELLLRYNQLLSLEGYLFQELQQLETLKLDGNPLLHLGKNWLAALPALTTLSLLDTQIRMSPEPGFWGAKNLHTLSLKLPALPAPAVLFLPMYLTSLELHIASGTTEHWTLSPAIFPSLETLTISGGGLKLKLGSQNASGVFPALQKLSLLKNSLDAFCSQGTSNLFLWQLPKLQSLRVWGAGNSSRPCLITGLPSLRELKLASLQSITQPRSVQLEELVGDLPQLQALVLSSTGLKSLSAAAFQRLHSLQVLVLEYEKDLMLQDSLREYSPQMPHYIYILESNLACHCANAWMEPWVKRSTKTYIYIRDNRLCPGQDRLSARGSLPSFLWDHCPQTLELKLFLASSALVFMLIALPLLQEARNSWIPYLQALFRVWLQGLRGKGDKGKRFLFDVFVSHCRQDQGWVIEELLPALEGFLPAGLGLRLCLPERDFEPGKDVVDNVVDSMLSSRTTLCVLSGQALCNPRCRLELRLATSLLLAAPSPPVLLLVFLEPISRHQLPGYHRLARLLRRGDYCLWPEEEERKSGFWTWLRSRLG</sequence>
<keyword id="KW-0325">Glycoprotein</keyword>
<keyword id="KW-0391">Immunity</keyword>
<keyword id="KW-0395">Inflammatory response</keyword>
<keyword id="KW-0399">Innate immunity</keyword>
<keyword id="KW-0433">Leucine-rich repeat</keyword>
<keyword id="KW-0472">Membrane</keyword>
<keyword id="KW-0520">NAD</keyword>
<keyword id="KW-0675">Receptor</keyword>
<keyword id="KW-1185">Reference proteome</keyword>
<keyword id="KW-0677">Repeat</keyword>
<keyword id="KW-0732">Signal</keyword>
<keyword id="KW-0812">Transmembrane</keyword>
<keyword id="KW-1133">Transmembrane helix</keyword>
<comment type="function">
    <text evidence="5">Participates in the innate immune response to microbial agents. Acts via MYD88 and TRAF6, leading to NF-kappa-B activation, cytokine secretion and the inflammatory response. Plays a role in preventing infection of internal organs of the urogenital system.</text>
</comment>
<comment type="subunit">
    <text evidence="1">Binds MYD88 via their respective TIR domains.</text>
</comment>
<comment type="subcellular location">
    <subcellularLocation>
        <location evidence="1">Membrane</location>
        <topology evidence="1">Single-pass type I membrane protein</topology>
    </subcellularLocation>
</comment>
<comment type="tissue specificity">
    <text evidence="5">Macrophages, liver, kidney and bladder epithelial cells.</text>
</comment>
<comment type="disruption phenotype">
    <text evidence="5">Has increased susceptibility to the uropathogenic E.coli strain 8NU. Following infection, kidneys show a significantly increased bacterial load and increased inflammatory response, whereas bladder shows a similar response to wild type.</text>
</comment>
<comment type="similarity">
    <text evidence="8">Belongs to the Toll-like receptor family.</text>
</comment>
<comment type="caution">
    <text evidence="9">There is some confusion regarding the nomenclature of this gene. In the literature, Tlr12 is frequently referred to as Tlr11 and vice-versa.</text>
</comment>
<comment type="caution">
    <text evidence="2 8">In some plant proteins and in human SARM1, the TIR domain has NAD(+) hydrolase (NADase) activity (By similarity). However, despite the presence of the catalytic Asp residue, the isolated TIR domain of human TLR4 lacks NADase activity (By similarity). Based on this, it is unlikely that Toll-like receptors have NADase activity.</text>
</comment>
<protein>
    <recommendedName>
        <fullName evidence="6">Toll-like receptor 12</fullName>
    </recommendedName>
    <alternativeName>
        <fullName evidence="7">Toll-like receptor 11</fullName>
    </alternativeName>
</protein>
<proteinExistence type="evidence at protein level"/>